<feature type="chain" id="PRO_0000362493" description="ATP synthase subunit a">
    <location>
        <begin position="1"/>
        <end position="239"/>
    </location>
</feature>
<feature type="transmembrane region" description="Helical" evidence="1">
    <location>
        <begin position="31"/>
        <end position="51"/>
    </location>
</feature>
<feature type="transmembrane region" description="Helical" evidence="1">
    <location>
        <begin position="91"/>
        <end position="111"/>
    </location>
</feature>
<feature type="transmembrane region" description="Helical" evidence="1">
    <location>
        <begin position="125"/>
        <end position="145"/>
    </location>
</feature>
<feature type="transmembrane region" description="Helical" evidence="1">
    <location>
        <begin position="151"/>
        <end position="171"/>
    </location>
</feature>
<feature type="transmembrane region" description="Helical" evidence="1">
    <location>
        <begin position="194"/>
        <end position="214"/>
    </location>
</feature>
<feature type="transmembrane region" description="Helical" evidence="1">
    <location>
        <begin position="215"/>
        <end position="235"/>
    </location>
</feature>
<protein>
    <recommendedName>
        <fullName evidence="1">ATP synthase subunit a</fullName>
    </recommendedName>
    <alternativeName>
        <fullName evidence="1">ATP synthase F0 sector subunit a</fullName>
    </alternativeName>
    <alternativeName>
        <fullName evidence="1">F-ATPase subunit 6</fullName>
    </alternativeName>
</protein>
<dbReference type="EMBL" id="CP000478">
    <property type="protein sequence ID" value="ABK17292.1"/>
    <property type="molecule type" value="Genomic_DNA"/>
</dbReference>
<dbReference type="RefSeq" id="WP_011698462.1">
    <property type="nucleotide sequence ID" value="NC_008554.1"/>
</dbReference>
<dbReference type="SMR" id="A0LIP0"/>
<dbReference type="FunCoup" id="A0LIP0">
    <property type="interactions" value="344"/>
</dbReference>
<dbReference type="STRING" id="335543.Sfum_1605"/>
<dbReference type="KEGG" id="sfu:Sfum_1605"/>
<dbReference type="eggNOG" id="COG0356">
    <property type="taxonomic scope" value="Bacteria"/>
</dbReference>
<dbReference type="HOGENOM" id="CLU_041018_2_2_7"/>
<dbReference type="InParanoid" id="A0LIP0"/>
<dbReference type="OrthoDB" id="9789241at2"/>
<dbReference type="Proteomes" id="UP000001784">
    <property type="component" value="Chromosome"/>
</dbReference>
<dbReference type="GO" id="GO:0005886">
    <property type="term" value="C:plasma membrane"/>
    <property type="evidence" value="ECO:0007669"/>
    <property type="project" value="UniProtKB-SubCell"/>
</dbReference>
<dbReference type="GO" id="GO:0045259">
    <property type="term" value="C:proton-transporting ATP synthase complex"/>
    <property type="evidence" value="ECO:0007669"/>
    <property type="project" value="UniProtKB-KW"/>
</dbReference>
<dbReference type="GO" id="GO:0046933">
    <property type="term" value="F:proton-transporting ATP synthase activity, rotational mechanism"/>
    <property type="evidence" value="ECO:0007669"/>
    <property type="project" value="UniProtKB-UniRule"/>
</dbReference>
<dbReference type="GO" id="GO:0042777">
    <property type="term" value="P:proton motive force-driven plasma membrane ATP synthesis"/>
    <property type="evidence" value="ECO:0007669"/>
    <property type="project" value="TreeGrafter"/>
</dbReference>
<dbReference type="CDD" id="cd00310">
    <property type="entry name" value="ATP-synt_Fo_a_6"/>
    <property type="match status" value="1"/>
</dbReference>
<dbReference type="Gene3D" id="1.20.120.220">
    <property type="entry name" value="ATP synthase, F0 complex, subunit A"/>
    <property type="match status" value="1"/>
</dbReference>
<dbReference type="HAMAP" id="MF_01393">
    <property type="entry name" value="ATP_synth_a_bact"/>
    <property type="match status" value="1"/>
</dbReference>
<dbReference type="InterPro" id="IPR045082">
    <property type="entry name" value="ATP_syn_F0_a_bact/chloroplast"/>
</dbReference>
<dbReference type="InterPro" id="IPR000568">
    <property type="entry name" value="ATP_synth_F0_asu"/>
</dbReference>
<dbReference type="InterPro" id="IPR023011">
    <property type="entry name" value="ATP_synth_F0_asu_AS"/>
</dbReference>
<dbReference type="InterPro" id="IPR035908">
    <property type="entry name" value="F0_ATP_A_sf"/>
</dbReference>
<dbReference type="NCBIfam" id="TIGR01131">
    <property type="entry name" value="ATP_synt_6_or_A"/>
    <property type="match status" value="1"/>
</dbReference>
<dbReference type="PANTHER" id="PTHR42823">
    <property type="entry name" value="ATP SYNTHASE SUBUNIT A, CHLOROPLASTIC"/>
    <property type="match status" value="1"/>
</dbReference>
<dbReference type="PANTHER" id="PTHR42823:SF3">
    <property type="entry name" value="ATP SYNTHASE SUBUNIT A, CHLOROPLASTIC"/>
    <property type="match status" value="1"/>
</dbReference>
<dbReference type="Pfam" id="PF00119">
    <property type="entry name" value="ATP-synt_A"/>
    <property type="match status" value="1"/>
</dbReference>
<dbReference type="PRINTS" id="PR00123">
    <property type="entry name" value="ATPASEA"/>
</dbReference>
<dbReference type="SUPFAM" id="SSF81336">
    <property type="entry name" value="F1F0 ATP synthase subunit A"/>
    <property type="match status" value="1"/>
</dbReference>
<dbReference type="PROSITE" id="PS00449">
    <property type="entry name" value="ATPASE_A"/>
    <property type="match status" value="1"/>
</dbReference>
<keyword id="KW-0066">ATP synthesis</keyword>
<keyword id="KW-0997">Cell inner membrane</keyword>
<keyword id="KW-1003">Cell membrane</keyword>
<keyword id="KW-0138">CF(0)</keyword>
<keyword id="KW-0375">Hydrogen ion transport</keyword>
<keyword id="KW-0406">Ion transport</keyword>
<keyword id="KW-0472">Membrane</keyword>
<keyword id="KW-1185">Reference proteome</keyword>
<keyword id="KW-0812">Transmembrane</keyword>
<keyword id="KW-1133">Transmembrane helix</keyword>
<keyword id="KW-0813">Transport</keyword>
<sequence length="239" mass="26530">MEHPILFLNLLFEKLGLHVVGPEQAKSFGDFLLQPHVTYTWVVMLVLLGLGSMAAKGLEMVPKGAQNFFEVVITGIEDFMISITGEEGRFVFPLIASLGMFILFSNYLGMIPGFFSPTANINTTAACALISVVFTHVIGIKFHGVKYIKHFMGPVWWLTPLIMPIEIIGHIARVLSLSIRLFGNVFGEELVLGILFFLAGFYLAPLPMMFLGLFTGFIQAFIFCLLSMMYFAGAIEHAH</sequence>
<evidence type="ECO:0000255" key="1">
    <source>
        <dbReference type="HAMAP-Rule" id="MF_01393"/>
    </source>
</evidence>
<organism>
    <name type="scientific">Syntrophobacter fumaroxidans (strain DSM 10017 / MPOB)</name>
    <dbReference type="NCBI Taxonomy" id="335543"/>
    <lineage>
        <taxon>Bacteria</taxon>
        <taxon>Pseudomonadati</taxon>
        <taxon>Thermodesulfobacteriota</taxon>
        <taxon>Syntrophobacteria</taxon>
        <taxon>Syntrophobacterales</taxon>
        <taxon>Syntrophobacteraceae</taxon>
        <taxon>Syntrophobacter</taxon>
    </lineage>
</organism>
<proteinExistence type="inferred from homology"/>
<reference key="1">
    <citation type="submission" date="2006-10" db="EMBL/GenBank/DDBJ databases">
        <title>Complete sequence of Syntrophobacter fumaroxidans MPOB.</title>
        <authorList>
            <consortium name="US DOE Joint Genome Institute"/>
            <person name="Copeland A."/>
            <person name="Lucas S."/>
            <person name="Lapidus A."/>
            <person name="Barry K."/>
            <person name="Detter J.C."/>
            <person name="Glavina del Rio T."/>
            <person name="Hammon N."/>
            <person name="Israni S."/>
            <person name="Pitluck S."/>
            <person name="Goltsman E.G."/>
            <person name="Martinez M."/>
            <person name="Schmutz J."/>
            <person name="Larimer F."/>
            <person name="Land M."/>
            <person name="Hauser L."/>
            <person name="Kyrpides N."/>
            <person name="Kim E."/>
            <person name="Boone D.R."/>
            <person name="Brockman F."/>
            <person name="Culley D."/>
            <person name="Ferry J."/>
            <person name="Gunsalus R."/>
            <person name="McInerney M.J."/>
            <person name="Morrison M."/>
            <person name="Plugge C."/>
            <person name="Rohlin L."/>
            <person name="Scholten J."/>
            <person name="Sieber J."/>
            <person name="Stams A.J.M."/>
            <person name="Worm P."/>
            <person name="Henstra A.M."/>
            <person name="Richardson P."/>
        </authorList>
    </citation>
    <scope>NUCLEOTIDE SEQUENCE [LARGE SCALE GENOMIC DNA]</scope>
    <source>
        <strain>DSM 10017 / MPOB</strain>
    </source>
</reference>
<gene>
    <name evidence="1" type="primary">atpB</name>
    <name type="ordered locus">Sfum_1605</name>
</gene>
<comment type="function">
    <text evidence="1">Key component of the proton channel; it plays a direct role in the translocation of protons across the membrane.</text>
</comment>
<comment type="subunit">
    <text evidence="1">F-type ATPases have 2 components, CF(1) - the catalytic core - and CF(0) - the membrane proton channel. CF(1) has five subunits: alpha(3), beta(3), gamma(1), delta(1), epsilon(1). CF(0) has three main subunits: a(1), b(2) and c(9-12). The alpha and beta chains form an alternating ring which encloses part of the gamma chain. CF(1) is attached to CF(0) by a central stalk formed by the gamma and epsilon chains, while a peripheral stalk is formed by the delta and b chains.</text>
</comment>
<comment type="subcellular location">
    <subcellularLocation>
        <location evidence="1">Cell inner membrane</location>
        <topology evidence="1">Multi-pass membrane protein</topology>
    </subcellularLocation>
</comment>
<comment type="similarity">
    <text evidence="1">Belongs to the ATPase A chain family.</text>
</comment>
<accession>A0LIP0</accession>
<name>ATP6_SYNFM</name>